<proteinExistence type="evidence at transcript level"/>
<protein>
    <recommendedName>
        <fullName>Peptide methionine sulfoxide reductase B3</fullName>
        <shortName>AtMSRB3</shortName>
        <ecNumber>1.8.4.12</ecNumber>
    </recommendedName>
    <alternativeName>
        <fullName>Peptide-methionine (R)-S-oxide reductase</fullName>
    </alternativeName>
</protein>
<sequence length="176" mass="18847">MNIVNSKILFLSFTLLLLLQSSIVESDSICLSSGVASTVAMAAPGSVQKGDEEWRAILSPEQFRILRQKGTEYPGTGEYVNFDKEGVYGCVGCNAPLYKSTTKFNAGCGWPAFFEGIPGAITRTTDPDGRRIEINCATCGGHLGHVFKGEGFATPTDERHCVNSVSLKFTPAASSL</sequence>
<comment type="function">
    <text evidence="1 4">Catalyzes the reduction of methionine sulfoxide (MetSO) to methionine in proteins. Plays a protective role against oxidative stress by restoring activity to proteins that have been inactivated by methionine oxidation. Involved in cold tolerance. Eliminates MetSO and reactive oxygen species that accumulate at the ER during cold acclimation. MSRB family specifically reduces the MetSO R-enantiomer (By similarity).</text>
</comment>
<comment type="catalytic activity">
    <reaction>
        <text>L-methionyl-[protein] + [thioredoxin]-disulfide + H2O = L-methionyl-(R)-S-oxide-[protein] + [thioredoxin]-dithiol</text>
        <dbReference type="Rhea" id="RHEA:24164"/>
        <dbReference type="Rhea" id="RHEA-COMP:10698"/>
        <dbReference type="Rhea" id="RHEA-COMP:10700"/>
        <dbReference type="Rhea" id="RHEA-COMP:12313"/>
        <dbReference type="Rhea" id="RHEA-COMP:12314"/>
        <dbReference type="ChEBI" id="CHEBI:15377"/>
        <dbReference type="ChEBI" id="CHEBI:16044"/>
        <dbReference type="ChEBI" id="CHEBI:29950"/>
        <dbReference type="ChEBI" id="CHEBI:45764"/>
        <dbReference type="ChEBI" id="CHEBI:50058"/>
        <dbReference type="EC" id="1.8.4.12"/>
    </reaction>
</comment>
<comment type="cofactor">
    <cofactor evidence="1">
        <name>Zn(2+)</name>
        <dbReference type="ChEBI" id="CHEBI:29105"/>
    </cofactor>
    <text evidence="1">Binds 1 zinc ion per subunit.</text>
</comment>
<comment type="subcellular location">
    <subcellularLocation>
        <location evidence="4">Endoplasmic reticulum</location>
    </subcellularLocation>
</comment>
<comment type="disruption phenotype">
    <text evidence="4">Increased methionine sulfoxide content after cold treatment. Increased sensitivity to oxidative stress induced by cold. Loss of cold acclimation.</text>
</comment>
<comment type="similarity">
    <text evidence="5">Belongs to the MsrB Met sulfoxide reductase family.</text>
</comment>
<comment type="sequence caution" evidence="5">
    <conflict type="erroneous gene model prediction">
        <sequence resource="EMBL-CDS" id="AAD03449"/>
    </conflict>
    <text>The predicted gene has been split into 2 genes: At4g04800 and At4g04810.</text>
</comment>
<comment type="sequence caution" evidence="5">
    <conflict type="erroneous initiation">
        <sequence resource="EMBL-CDS" id="AAL50094"/>
    </conflict>
    <text>Truncated N-terminus.</text>
</comment>
<comment type="sequence caution" evidence="5">
    <conflict type="erroneous initiation">
        <sequence resource="EMBL-CDS" id="AAM65479"/>
    </conflict>
    <text>Truncated N-terminus.</text>
</comment>
<comment type="sequence caution" evidence="5">
    <conflict type="erroneous initiation">
        <sequence resource="EMBL-CDS" id="CAB80845"/>
    </conflict>
    <text>Truncated N-terminus.</text>
</comment>
<keyword id="KW-1015">Disulfide bond</keyword>
<keyword id="KW-0249">Electron transport</keyword>
<keyword id="KW-0256">Endoplasmic reticulum</keyword>
<keyword id="KW-0479">Metal-binding</keyword>
<keyword id="KW-0560">Oxidoreductase</keyword>
<keyword id="KW-0676">Redox-active center</keyword>
<keyword id="KW-1185">Reference proteome</keyword>
<keyword id="KW-0732">Signal</keyword>
<keyword id="KW-0813">Transport</keyword>
<keyword id="KW-0862">Zinc</keyword>
<name>MSRB3_ARATH</name>
<feature type="signal peptide" evidence="2">
    <location>
        <begin position="1"/>
        <end position="26"/>
    </location>
</feature>
<feature type="chain" id="PRO_0000395521" description="Peptide methionine sulfoxide reductase B3">
    <location>
        <begin position="27"/>
        <end position="176"/>
    </location>
</feature>
<feature type="domain" description="MsrB" evidence="3">
    <location>
        <begin position="51"/>
        <end position="172"/>
    </location>
</feature>
<feature type="active site" description="Nucleophile" evidence="3">
    <location>
        <position position="161"/>
    </location>
</feature>
<feature type="binding site" evidence="3">
    <location>
        <position position="90"/>
    </location>
    <ligand>
        <name>Zn(2+)</name>
        <dbReference type="ChEBI" id="CHEBI:29105"/>
    </ligand>
</feature>
<feature type="binding site" evidence="3">
    <location>
        <position position="93"/>
    </location>
    <ligand>
        <name>Zn(2+)</name>
        <dbReference type="ChEBI" id="CHEBI:29105"/>
    </ligand>
</feature>
<feature type="binding site" evidence="3">
    <location>
        <position position="136"/>
    </location>
    <ligand>
        <name>Zn(2+)</name>
        <dbReference type="ChEBI" id="CHEBI:29105"/>
    </ligand>
</feature>
<feature type="binding site" evidence="3">
    <location>
        <position position="139"/>
    </location>
    <ligand>
        <name>Zn(2+)</name>
        <dbReference type="ChEBI" id="CHEBI:29105"/>
    </ligand>
</feature>
<feature type="disulfide bond" description="Redox-active" evidence="1">
    <location>
        <begin position="108"/>
        <end position="161"/>
    </location>
</feature>
<gene>
    <name type="primary">MSRB3</name>
    <name type="ordered locus">At4g04800</name>
    <name type="ORF">T4B21.6</name>
</gene>
<evidence type="ECO:0000250" key="1"/>
<evidence type="ECO:0000255" key="2"/>
<evidence type="ECO:0000255" key="3">
    <source>
        <dbReference type="PROSITE-ProRule" id="PRU01126"/>
    </source>
</evidence>
<evidence type="ECO:0000269" key="4">
    <source>
    </source>
</evidence>
<evidence type="ECO:0000305" key="5"/>
<organism>
    <name type="scientific">Arabidopsis thaliana</name>
    <name type="common">Mouse-ear cress</name>
    <dbReference type="NCBI Taxonomy" id="3702"/>
    <lineage>
        <taxon>Eukaryota</taxon>
        <taxon>Viridiplantae</taxon>
        <taxon>Streptophyta</taxon>
        <taxon>Embryophyta</taxon>
        <taxon>Tracheophyta</taxon>
        <taxon>Spermatophyta</taxon>
        <taxon>Magnoliopsida</taxon>
        <taxon>eudicotyledons</taxon>
        <taxon>Gunneridae</taxon>
        <taxon>Pentapetalae</taxon>
        <taxon>rosids</taxon>
        <taxon>malvids</taxon>
        <taxon>Brassicales</taxon>
        <taxon>Brassicaceae</taxon>
        <taxon>Camelineae</taxon>
        <taxon>Arabidopsis</taxon>
    </lineage>
</organism>
<reference key="1">
    <citation type="journal article" date="1999" name="Nature">
        <title>Sequence and analysis of chromosome 4 of the plant Arabidopsis thaliana.</title>
        <authorList>
            <person name="Mayer K.F.X."/>
            <person name="Schueller C."/>
            <person name="Wambutt R."/>
            <person name="Murphy G."/>
            <person name="Volckaert G."/>
            <person name="Pohl T."/>
            <person name="Duesterhoeft A."/>
            <person name="Stiekema W."/>
            <person name="Entian K.-D."/>
            <person name="Terryn N."/>
            <person name="Harris B."/>
            <person name="Ansorge W."/>
            <person name="Brandt P."/>
            <person name="Grivell L.A."/>
            <person name="Rieger M."/>
            <person name="Weichselgartner M."/>
            <person name="de Simone V."/>
            <person name="Obermaier B."/>
            <person name="Mache R."/>
            <person name="Mueller M."/>
            <person name="Kreis M."/>
            <person name="Delseny M."/>
            <person name="Puigdomenech P."/>
            <person name="Watson M."/>
            <person name="Schmidtheini T."/>
            <person name="Reichert B."/>
            <person name="Portetelle D."/>
            <person name="Perez-Alonso M."/>
            <person name="Boutry M."/>
            <person name="Bancroft I."/>
            <person name="Vos P."/>
            <person name="Hoheisel J."/>
            <person name="Zimmermann W."/>
            <person name="Wedler H."/>
            <person name="Ridley P."/>
            <person name="Langham S.-A."/>
            <person name="McCullagh B."/>
            <person name="Bilham L."/>
            <person name="Robben J."/>
            <person name="van der Schueren J."/>
            <person name="Grymonprez B."/>
            <person name="Chuang Y.-J."/>
            <person name="Vandenbussche F."/>
            <person name="Braeken M."/>
            <person name="Weltjens I."/>
            <person name="Voet M."/>
            <person name="Bastiaens I."/>
            <person name="Aert R."/>
            <person name="Defoor E."/>
            <person name="Weitzenegger T."/>
            <person name="Bothe G."/>
            <person name="Ramsperger U."/>
            <person name="Hilbert H."/>
            <person name="Braun M."/>
            <person name="Holzer E."/>
            <person name="Brandt A."/>
            <person name="Peters S."/>
            <person name="van Staveren M."/>
            <person name="Dirkse W."/>
            <person name="Mooijman P."/>
            <person name="Klein Lankhorst R."/>
            <person name="Rose M."/>
            <person name="Hauf J."/>
            <person name="Koetter P."/>
            <person name="Berneiser S."/>
            <person name="Hempel S."/>
            <person name="Feldpausch M."/>
            <person name="Lamberth S."/>
            <person name="Van den Daele H."/>
            <person name="De Keyser A."/>
            <person name="Buysshaert C."/>
            <person name="Gielen J."/>
            <person name="Villarroel R."/>
            <person name="De Clercq R."/>
            <person name="van Montagu M."/>
            <person name="Rogers J."/>
            <person name="Cronin A."/>
            <person name="Quail M.A."/>
            <person name="Bray-Allen S."/>
            <person name="Clark L."/>
            <person name="Doggett J."/>
            <person name="Hall S."/>
            <person name="Kay M."/>
            <person name="Lennard N."/>
            <person name="McLay K."/>
            <person name="Mayes R."/>
            <person name="Pettett A."/>
            <person name="Rajandream M.A."/>
            <person name="Lyne M."/>
            <person name="Benes V."/>
            <person name="Rechmann S."/>
            <person name="Borkova D."/>
            <person name="Bloecker H."/>
            <person name="Scharfe M."/>
            <person name="Grimm M."/>
            <person name="Loehnert T.-H."/>
            <person name="Dose S."/>
            <person name="de Haan M."/>
            <person name="Maarse A.C."/>
            <person name="Schaefer M."/>
            <person name="Mueller-Auer S."/>
            <person name="Gabel C."/>
            <person name="Fuchs M."/>
            <person name="Fartmann B."/>
            <person name="Granderath K."/>
            <person name="Dauner D."/>
            <person name="Herzl A."/>
            <person name="Neumann S."/>
            <person name="Argiriou A."/>
            <person name="Vitale D."/>
            <person name="Liguori R."/>
            <person name="Piravandi E."/>
            <person name="Massenet O."/>
            <person name="Quigley F."/>
            <person name="Clabauld G."/>
            <person name="Muendlein A."/>
            <person name="Felber R."/>
            <person name="Schnabl S."/>
            <person name="Hiller R."/>
            <person name="Schmidt W."/>
            <person name="Lecharny A."/>
            <person name="Aubourg S."/>
            <person name="Chefdor F."/>
            <person name="Cooke R."/>
            <person name="Berger C."/>
            <person name="Monfort A."/>
            <person name="Casacuberta E."/>
            <person name="Gibbons T."/>
            <person name="Weber N."/>
            <person name="Vandenbol M."/>
            <person name="Bargues M."/>
            <person name="Terol J."/>
            <person name="Torres A."/>
            <person name="Perez-Perez A."/>
            <person name="Purnelle B."/>
            <person name="Bent E."/>
            <person name="Johnson S."/>
            <person name="Tacon D."/>
            <person name="Jesse T."/>
            <person name="Heijnen L."/>
            <person name="Schwarz S."/>
            <person name="Scholler P."/>
            <person name="Heber S."/>
            <person name="Francs P."/>
            <person name="Bielke C."/>
            <person name="Frishman D."/>
            <person name="Haase D."/>
            <person name="Lemcke K."/>
            <person name="Mewes H.-W."/>
            <person name="Stocker S."/>
            <person name="Zaccaria P."/>
            <person name="Bevan M."/>
            <person name="Wilson R.K."/>
            <person name="de la Bastide M."/>
            <person name="Habermann K."/>
            <person name="Parnell L."/>
            <person name="Dedhia N."/>
            <person name="Gnoj L."/>
            <person name="Schutz K."/>
            <person name="Huang E."/>
            <person name="Spiegel L."/>
            <person name="Sekhon M."/>
            <person name="Murray J."/>
            <person name="Sheet P."/>
            <person name="Cordes M."/>
            <person name="Abu-Threideh J."/>
            <person name="Stoneking T."/>
            <person name="Kalicki J."/>
            <person name="Graves T."/>
            <person name="Harmon G."/>
            <person name="Edwards J."/>
            <person name="Latreille P."/>
            <person name="Courtney L."/>
            <person name="Cloud J."/>
            <person name="Abbott A."/>
            <person name="Scott K."/>
            <person name="Johnson D."/>
            <person name="Minx P."/>
            <person name="Bentley D."/>
            <person name="Fulton B."/>
            <person name="Miller N."/>
            <person name="Greco T."/>
            <person name="Kemp K."/>
            <person name="Kramer J."/>
            <person name="Fulton L."/>
            <person name="Mardis E."/>
            <person name="Dante M."/>
            <person name="Pepin K."/>
            <person name="Hillier L.W."/>
            <person name="Nelson J."/>
            <person name="Spieth J."/>
            <person name="Ryan E."/>
            <person name="Andrews S."/>
            <person name="Geisel C."/>
            <person name="Layman D."/>
            <person name="Du H."/>
            <person name="Ali J."/>
            <person name="Berghoff A."/>
            <person name="Jones K."/>
            <person name="Drone K."/>
            <person name="Cotton M."/>
            <person name="Joshu C."/>
            <person name="Antonoiu B."/>
            <person name="Zidanic M."/>
            <person name="Strong C."/>
            <person name="Sun H."/>
            <person name="Lamar B."/>
            <person name="Yordan C."/>
            <person name="Ma P."/>
            <person name="Zhong J."/>
            <person name="Preston R."/>
            <person name="Vil D."/>
            <person name="Shekher M."/>
            <person name="Matero A."/>
            <person name="Shah R."/>
            <person name="Swaby I.K."/>
            <person name="O'Shaughnessy A."/>
            <person name="Rodriguez M."/>
            <person name="Hoffman J."/>
            <person name="Till S."/>
            <person name="Granat S."/>
            <person name="Shohdy N."/>
            <person name="Hasegawa A."/>
            <person name="Hameed A."/>
            <person name="Lodhi M."/>
            <person name="Johnson A."/>
            <person name="Chen E."/>
            <person name="Marra M.A."/>
            <person name="Martienssen R."/>
            <person name="McCombie W.R."/>
        </authorList>
    </citation>
    <scope>NUCLEOTIDE SEQUENCE [LARGE SCALE GENOMIC DNA]</scope>
    <source>
        <strain>cv. Columbia</strain>
    </source>
</reference>
<reference key="2">
    <citation type="journal article" date="2017" name="Plant J.">
        <title>Araport11: a complete reannotation of the Arabidopsis thaliana reference genome.</title>
        <authorList>
            <person name="Cheng C.Y."/>
            <person name="Krishnakumar V."/>
            <person name="Chan A.P."/>
            <person name="Thibaud-Nissen F."/>
            <person name="Schobel S."/>
            <person name="Town C.D."/>
        </authorList>
    </citation>
    <scope>GENOME REANNOTATION</scope>
    <source>
        <strain>cv. Columbia</strain>
    </source>
</reference>
<reference key="3">
    <citation type="submission" date="2002-03" db="EMBL/GenBank/DDBJ databases">
        <title>Full-length cDNA from Arabidopsis thaliana.</title>
        <authorList>
            <person name="Brover V.V."/>
            <person name="Troukhan M.E."/>
            <person name="Alexandrov N.A."/>
            <person name="Lu Y.-P."/>
            <person name="Flavell R.B."/>
            <person name="Feldmann K.A."/>
        </authorList>
    </citation>
    <scope>NUCLEOTIDE SEQUENCE [LARGE SCALE MRNA]</scope>
</reference>
<reference key="4">
    <citation type="journal article" date="2003" name="Science">
        <title>Empirical analysis of transcriptional activity in the Arabidopsis genome.</title>
        <authorList>
            <person name="Yamada K."/>
            <person name="Lim J."/>
            <person name="Dale J.M."/>
            <person name="Chen H."/>
            <person name="Shinn P."/>
            <person name="Palm C.J."/>
            <person name="Southwick A.M."/>
            <person name="Wu H.C."/>
            <person name="Kim C.J."/>
            <person name="Nguyen M."/>
            <person name="Pham P.K."/>
            <person name="Cheuk R.F."/>
            <person name="Karlin-Newmann G."/>
            <person name="Liu S.X."/>
            <person name="Lam B."/>
            <person name="Sakano H."/>
            <person name="Wu T."/>
            <person name="Yu G."/>
            <person name="Miranda M."/>
            <person name="Quach H.L."/>
            <person name="Tripp M."/>
            <person name="Chang C.H."/>
            <person name="Lee J.M."/>
            <person name="Toriumi M.J."/>
            <person name="Chan M.M."/>
            <person name="Tang C.C."/>
            <person name="Onodera C.S."/>
            <person name="Deng J.M."/>
            <person name="Akiyama K."/>
            <person name="Ansari Y."/>
            <person name="Arakawa T."/>
            <person name="Banh J."/>
            <person name="Banno F."/>
            <person name="Bowser L."/>
            <person name="Brooks S.Y."/>
            <person name="Carninci P."/>
            <person name="Chao Q."/>
            <person name="Choy N."/>
            <person name="Enju A."/>
            <person name="Goldsmith A.D."/>
            <person name="Gurjal M."/>
            <person name="Hansen N.F."/>
            <person name="Hayashizaki Y."/>
            <person name="Johnson-Hopson C."/>
            <person name="Hsuan V.W."/>
            <person name="Iida K."/>
            <person name="Karnes M."/>
            <person name="Khan S."/>
            <person name="Koesema E."/>
            <person name="Ishida J."/>
            <person name="Jiang P.X."/>
            <person name="Jones T."/>
            <person name="Kawai J."/>
            <person name="Kamiya A."/>
            <person name="Meyers C."/>
            <person name="Nakajima M."/>
            <person name="Narusaka M."/>
            <person name="Seki M."/>
            <person name="Sakurai T."/>
            <person name="Satou M."/>
            <person name="Tamse R."/>
            <person name="Vaysberg M."/>
            <person name="Wallender E.K."/>
            <person name="Wong C."/>
            <person name="Yamamura Y."/>
            <person name="Yuan S."/>
            <person name="Shinozaki K."/>
            <person name="Davis R.W."/>
            <person name="Theologis A."/>
            <person name="Ecker J.R."/>
        </authorList>
    </citation>
    <scope>NUCLEOTIDE SEQUENCE [LARGE SCALE MRNA] OF 7-176 AND 41-176</scope>
    <source>
        <strain>cv. Columbia</strain>
    </source>
</reference>
<reference key="5">
    <citation type="journal article" date="2006" name="Photosyn. Res.">
        <title>Plant methionine sulfoxide reductase A and B multigenic families.</title>
        <authorList>
            <person name="Rouhier N."/>
            <person name="Vieira Dos Santos C."/>
            <person name="Tarrago L."/>
            <person name="Rey P."/>
        </authorList>
    </citation>
    <scope>GENE FAMILY</scope>
    <scope>NOMENCLATURE</scope>
</reference>
<reference key="6">
    <citation type="journal article" date="2007" name="Plant Cell Physiol.">
        <title>Role of the methionine sulfoxide reductase MsrB3 in cold acclimation in Arabidopsis.</title>
        <authorList>
            <person name="Kwon S.J."/>
            <person name="Kwon S.I."/>
            <person name="Bae M.S."/>
            <person name="Cho E.J."/>
            <person name="Park O.K."/>
        </authorList>
    </citation>
    <scope>FUNCTION</scope>
    <scope>SUBCELLULAR LOCATION</scope>
    <scope>DISRUPTION PHENOTYPE</scope>
</reference>
<accession>Q9M0Z6</accession>
<accession>Q9ZS93</accession>
<dbReference type="EC" id="1.8.4.12"/>
<dbReference type="EMBL" id="AF118223">
    <property type="protein sequence ID" value="AAD03449.1"/>
    <property type="status" value="ALT_SEQ"/>
    <property type="molecule type" value="Genomic_DNA"/>
</dbReference>
<dbReference type="EMBL" id="AL161501">
    <property type="protein sequence ID" value="CAB80845.1"/>
    <property type="status" value="ALT_INIT"/>
    <property type="molecule type" value="Genomic_DNA"/>
</dbReference>
<dbReference type="EMBL" id="CP002687">
    <property type="protein sequence ID" value="AEE82427.1"/>
    <property type="molecule type" value="Genomic_DNA"/>
</dbReference>
<dbReference type="EMBL" id="AY087929">
    <property type="protein sequence ID" value="AAM65479.1"/>
    <property type="status" value="ALT_INIT"/>
    <property type="molecule type" value="mRNA"/>
</dbReference>
<dbReference type="EMBL" id="AY070756">
    <property type="protein sequence ID" value="AAL50094.1"/>
    <property type="status" value="ALT_INIT"/>
    <property type="molecule type" value="mRNA"/>
</dbReference>
<dbReference type="EMBL" id="AY097373">
    <property type="protein sequence ID" value="AAM19889.1"/>
    <property type="molecule type" value="mRNA"/>
</dbReference>
<dbReference type="PIR" id="D85060">
    <property type="entry name" value="D85060"/>
</dbReference>
<dbReference type="RefSeq" id="NP_567271.1">
    <property type="nucleotide sequence ID" value="NM_116718.3"/>
</dbReference>
<dbReference type="SMR" id="Q9M0Z6"/>
<dbReference type="BioGRID" id="11128">
    <property type="interactions" value="4"/>
</dbReference>
<dbReference type="FunCoup" id="Q9M0Z6">
    <property type="interactions" value="274"/>
</dbReference>
<dbReference type="IntAct" id="Q9M0Z6">
    <property type="interactions" value="5"/>
</dbReference>
<dbReference type="STRING" id="3702.Q9M0Z6"/>
<dbReference type="iPTMnet" id="Q9M0Z6"/>
<dbReference type="PaxDb" id="3702-AT4G04800.1"/>
<dbReference type="ProteomicsDB" id="238919"/>
<dbReference type="EnsemblPlants" id="AT4G04800.1">
    <property type="protein sequence ID" value="AT4G04800.1"/>
    <property type="gene ID" value="AT4G04800"/>
</dbReference>
<dbReference type="GeneID" id="825817"/>
<dbReference type="Gramene" id="AT4G04800.1">
    <property type="protein sequence ID" value="AT4G04800.1"/>
    <property type="gene ID" value="AT4G04800"/>
</dbReference>
<dbReference type="KEGG" id="ath:AT4G04800"/>
<dbReference type="Araport" id="AT4G04800"/>
<dbReference type="TAIR" id="AT4G04800">
    <property type="gene designation" value="MSRB3"/>
</dbReference>
<dbReference type="eggNOG" id="KOG0856">
    <property type="taxonomic scope" value="Eukaryota"/>
</dbReference>
<dbReference type="HOGENOM" id="CLU_031040_8_1_1"/>
<dbReference type="InParanoid" id="Q9M0Z6"/>
<dbReference type="OMA" id="ESDSICL"/>
<dbReference type="PhylomeDB" id="Q9M0Z6"/>
<dbReference type="PRO" id="PR:Q9M0Z6"/>
<dbReference type="Proteomes" id="UP000006548">
    <property type="component" value="Chromosome 4"/>
</dbReference>
<dbReference type="ExpressionAtlas" id="Q9M0Z6">
    <property type="expression patterns" value="baseline and differential"/>
</dbReference>
<dbReference type="GO" id="GO:0005829">
    <property type="term" value="C:cytosol"/>
    <property type="evidence" value="ECO:0007005"/>
    <property type="project" value="TAIR"/>
</dbReference>
<dbReference type="GO" id="GO:0005783">
    <property type="term" value="C:endoplasmic reticulum"/>
    <property type="evidence" value="ECO:0000314"/>
    <property type="project" value="UniProtKB"/>
</dbReference>
<dbReference type="GO" id="GO:0005634">
    <property type="term" value="C:nucleus"/>
    <property type="evidence" value="ECO:0007005"/>
    <property type="project" value="TAIR"/>
</dbReference>
<dbReference type="GO" id="GO:0046872">
    <property type="term" value="F:metal ion binding"/>
    <property type="evidence" value="ECO:0007669"/>
    <property type="project" value="UniProtKB-KW"/>
</dbReference>
<dbReference type="GO" id="GO:0033743">
    <property type="term" value="F:peptide-methionine (R)-S-oxide reductase activity"/>
    <property type="evidence" value="ECO:0007669"/>
    <property type="project" value="UniProtKB-EC"/>
</dbReference>
<dbReference type="GO" id="GO:0034599">
    <property type="term" value="P:cellular response to oxidative stress"/>
    <property type="evidence" value="ECO:0000315"/>
    <property type="project" value="UniProtKB"/>
</dbReference>
<dbReference type="GO" id="GO:0009631">
    <property type="term" value="P:cold acclimation"/>
    <property type="evidence" value="ECO:0000315"/>
    <property type="project" value="UniProtKB"/>
</dbReference>
<dbReference type="GO" id="GO:0030091">
    <property type="term" value="P:protein repair"/>
    <property type="evidence" value="ECO:0007669"/>
    <property type="project" value="InterPro"/>
</dbReference>
<dbReference type="Gene3D" id="2.170.150.20">
    <property type="entry name" value="Peptide methionine sulfoxide reductase"/>
    <property type="match status" value="1"/>
</dbReference>
<dbReference type="InterPro" id="IPR028427">
    <property type="entry name" value="Met_Sox_Rdtase_MsrB"/>
</dbReference>
<dbReference type="InterPro" id="IPR002579">
    <property type="entry name" value="Met_Sox_Rdtase_MsrB_dom"/>
</dbReference>
<dbReference type="InterPro" id="IPR011057">
    <property type="entry name" value="Mss4-like_sf"/>
</dbReference>
<dbReference type="NCBIfam" id="TIGR00357">
    <property type="entry name" value="peptide-methionine (R)-S-oxide reductase MsrB"/>
    <property type="match status" value="1"/>
</dbReference>
<dbReference type="PANTHER" id="PTHR46081">
    <property type="entry name" value="PEPTIDE METHIONINE SULFOXIDE REDUCTASE 2"/>
    <property type="match status" value="1"/>
</dbReference>
<dbReference type="PANTHER" id="PTHR46081:SF8">
    <property type="entry name" value="PEPTIDE METHIONINE SULFOXIDE REDUCTASE 2"/>
    <property type="match status" value="1"/>
</dbReference>
<dbReference type="Pfam" id="PF01641">
    <property type="entry name" value="SelR"/>
    <property type="match status" value="1"/>
</dbReference>
<dbReference type="SUPFAM" id="SSF51316">
    <property type="entry name" value="Mss4-like"/>
    <property type="match status" value="1"/>
</dbReference>
<dbReference type="PROSITE" id="PS51790">
    <property type="entry name" value="MSRB"/>
    <property type="match status" value="1"/>
</dbReference>